<comment type="function">
    <text evidence="2">Catalyzes the first step in the biosynthesis of chondroitin sulfate and dermatan sulfate proteoglycans, such as DCN. Transfers D-xylose from UDP-D-xylose to specific serine residues of the core protein. Required for normal maturation of chondrocytes during bone development, normal onset of ossification and normal embryonic and postnatal skeleton development, especially of the long bones.</text>
</comment>
<comment type="catalytic activity">
    <reaction evidence="3">
        <text>UDP-alpha-D-xylose + L-seryl-[protein] = 3-O-(beta-D-xylosyl)-L-seryl-[protein] + UDP + H(+)</text>
        <dbReference type="Rhea" id="RHEA:50192"/>
        <dbReference type="Rhea" id="RHEA-COMP:9863"/>
        <dbReference type="Rhea" id="RHEA-COMP:12567"/>
        <dbReference type="ChEBI" id="CHEBI:15378"/>
        <dbReference type="ChEBI" id="CHEBI:29999"/>
        <dbReference type="ChEBI" id="CHEBI:57632"/>
        <dbReference type="ChEBI" id="CHEBI:58223"/>
        <dbReference type="ChEBI" id="CHEBI:132085"/>
        <dbReference type="EC" id="2.4.2.26"/>
    </reaction>
</comment>
<comment type="cofactor">
    <cofactor evidence="3">
        <name>a divalent metal cation</name>
        <dbReference type="ChEBI" id="CHEBI:60240"/>
    </cofactor>
</comment>
<comment type="pathway">
    <text evidence="3">Glycan metabolism; chondroitin sulfate biosynthesis.</text>
</comment>
<comment type="pathway">
    <text evidence="3">Glycan metabolism; heparan sulfate biosynthesis.</text>
</comment>
<comment type="subunit">
    <text evidence="3">Monomer.</text>
</comment>
<comment type="subcellular location">
    <subcellularLocation>
        <location evidence="3">Golgi apparatus membrane</location>
        <topology evidence="1">Single-pass type II membrane protein</topology>
    </subcellularLocation>
</comment>
<comment type="PTM">
    <text evidence="3">Contains 7 disulfide bonds.</text>
</comment>
<comment type="PTM">
    <text evidence="3">N-glycosylated.</text>
</comment>
<comment type="similarity">
    <text evidence="6">Belongs to the glycosyltransferase 14 family. XylT subfamily.</text>
</comment>
<sequence length="821" mass="93859">YFSHRPKEKVRTDSNNENSVPKDFENVDNSNFAPRTQKQKHQPELAKKPLSRQKERLQRKLGAQDKGQGQSVLGKGPKEVLPPREKAPGNSSQGKDLSRHSHSRKSGGGGSPETKSDQVPKCDISGKEAISALTRAKSKHCRQEIAETYCRHKLGLLMPEKVARFCPLEGKANKNVQWDEDAVEYMPPNPVRIAFVLVVHGRASRQLQRMFKAIYHKDHFYYIHVDKRSNYLHRQVLQFSRQYDNVRVTSWRMATIWGGASLLSTYLQSMRDLLEMTDWPWDFFINLSAADYPIRTNDQLVAFLSRYRDMNFLKSHGRDNARFIRKQDLDRLFLECDTHMWRLGDRRIPEGIAVDGGSDWFLLNRKFVEYVAFSTDDLVTKMKQFYSYTLLPAESFFHTVLENSPHCDTMVDNNLRITNWNRKLGCKCQYKHIVDWCGCSPNDFKPQDFHRFQQTARPTFFARKFEAIVNQEIIGQLDSYLYGNYPAGTPGLRSYWENVYDEPDGIQSLSDVALTMYHSFIRLGLRRAESSLHTDGENSCRYYPMGHPASVHLYFLADRFQGFLIKHHVTNLAVSKLETLETWMMPKKVFKVASPPSDFGRLQFSEVGTDWDAKERLFRNFGGLLGPMDEPVGMQKWGKGPNVTVTVIWVDPVNVIAATYDILIESTAEFTHYKPPLNLPLRPGVWTVKILHHWVPVAETKFLVAPLTFSNKQPIKPEEALKLHNGPPRSAYMEQSFQSLNPVLSLHINPAQVEQARKNAAFTGTALEAWLVGGTWTAMDVCATGPTACPVMQTCSQTAWSSFSPDPKSELGAVKPDGRLR</sequence>
<protein>
    <recommendedName>
        <fullName>Xylosyltransferase 1</fullName>
        <ecNumber evidence="3">2.4.2.26</ecNumber>
    </recommendedName>
    <alternativeName>
        <fullName>Peptide O-xylosyltransferase 1</fullName>
    </alternativeName>
    <alternativeName>
        <fullName>Xylosyltransferase I</fullName>
    </alternativeName>
</protein>
<keyword id="KW-1015">Disulfide bond</keyword>
<keyword id="KW-0325">Glycoprotein</keyword>
<keyword id="KW-0328">Glycosyltransferase</keyword>
<keyword id="KW-0333">Golgi apparatus</keyword>
<keyword id="KW-0472">Membrane</keyword>
<keyword id="KW-0479">Metal-binding</keyword>
<keyword id="KW-1185">Reference proteome</keyword>
<keyword id="KW-0808">Transferase</keyword>
<proteinExistence type="evidence at transcript level"/>
<reference key="1">
    <citation type="journal article" date="2000" name="J. Mol. Biol.">
        <title>Molecular cloning and expression of human UDP-D-xylose:proteoglycan core protein beta-D-xylosyltransferase and its first isoform XT-II.</title>
        <authorList>
            <person name="Goetting C."/>
            <person name="Kuhn J."/>
            <person name="Zahn R."/>
            <person name="Brinkmann T."/>
            <person name="Kleesiek K."/>
        </authorList>
    </citation>
    <scope>NUCLEOTIDE SEQUENCE [MRNA]</scope>
    <source>
        <tissue>Liver</tissue>
    </source>
</reference>
<feature type="chain" id="PRO_0000191403" description="Xylosyltransferase 1">
    <location>
        <begin position="1" status="less than"/>
        <end position="821"/>
    </location>
</feature>
<feature type="topological domain" description="Lumenal" evidence="4">
    <location>
        <begin position="1" status="less than"/>
        <end position="821"/>
    </location>
</feature>
<feature type="region of interest" description="Disordered" evidence="5">
    <location>
        <begin position="1"/>
        <end position="121"/>
    </location>
</feature>
<feature type="region of interest" description="Disordered" evidence="5">
    <location>
        <begin position="801"/>
        <end position="821"/>
    </location>
</feature>
<feature type="compositionally biased region" description="Basic and acidic residues" evidence="5">
    <location>
        <begin position="9"/>
        <end position="25"/>
    </location>
</feature>
<feature type="compositionally biased region" description="Polar residues" evidence="5">
    <location>
        <begin position="27"/>
        <end position="36"/>
    </location>
</feature>
<feature type="compositionally biased region" description="Basic and acidic residues" evidence="5">
    <location>
        <begin position="41"/>
        <end position="58"/>
    </location>
</feature>
<feature type="compositionally biased region" description="Basic and acidic residues" evidence="5">
    <location>
        <begin position="76"/>
        <end position="87"/>
    </location>
</feature>
<feature type="binding site" evidence="3">
    <location>
        <position position="198"/>
    </location>
    <ligand>
        <name>UDP-alpha-D-xylose</name>
        <dbReference type="ChEBI" id="CHEBI:57632"/>
    </ligand>
</feature>
<feature type="binding site" evidence="3">
    <location>
        <position position="226"/>
    </location>
    <ligand>
        <name>UDP-alpha-D-xylose</name>
        <dbReference type="ChEBI" id="CHEBI:57632"/>
    </ligand>
</feature>
<feature type="binding site" evidence="3">
    <location>
        <begin position="255"/>
        <end position="257"/>
    </location>
    <ligand>
        <name>UDP-alpha-D-xylose</name>
        <dbReference type="ChEBI" id="CHEBI:57632"/>
    </ligand>
</feature>
<feature type="binding site" evidence="3">
    <location>
        <begin position="359"/>
        <end position="360"/>
    </location>
    <ligand>
        <name>UDP-alpha-D-xylose</name>
        <dbReference type="ChEBI" id="CHEBI:57632"/>
    </ligand>
</feature>
<feature type="binding site" evidence="3">
    <location>
        <position position="440"/>
    </location>
    <ligand>
        <name>UDP-alpha-D-xylose</name>
        <dbReference type="ChEBI" id="CHEBI:57632"/>
    </ligand>
</feature>
<feature type="binding site" evidence="3">
    <location>
        <begin position="463"/>
        <end position="464"/>
    </location>
    <ligand>
        <name>UDP-alpha-D-xylose</name>
        <dbReference type="ChEBI" id="CHEBI:57632"/>
    </ligand>
</feature>
<feature type="glycosylation site" description="N-linked (GlcNAc...) asparagine" evidence="4">
    <location>
        <position position="90"/>
    </location>
</feature>
<feature type="glycosylation site" description="N-linked (GlcNAc...) asparagine" evidence="4">
    <location>
        <position position="286"/>
    </location>
</feature>
<feature type="glycosylation site" description="N-linked (GlcNAc...) asparagine" evidence="4">
    <location>
        <position position="642"/>
    </location>
</feature>
<feature type="disulfide bond" evidence="3">
    <location>
        <begin position="122"/>
        <end position="150"/>
    </location>
</feature>
<feature type="disulfide bond" evidence="3">
    <location>
        <begin position="166"/>
        <end position="407"/>
    </location>
</feature>
<feature type="disulfide bond" evidence="3">
    <location>
        <begin position="426"/>
        <end position="439"/>
    </location>
</feature>
<feature type="disulfide bond" evidence="3">
    <location>
        <begin position="428"/>
        <end position="437"/>
    </location>
</feature>
<feature type="disulfide bond" evidence="3">
    <location>
        <begin position="540"/>
        <end position="789"/>
    </location>
</feature>
<feature type="disulfide bond" evidence="3">
    <location>
        <begin position="782"/>
        <end position="795"/>
    </location>
</feature>
<feature type="non-terminal residue">
    <location>
        <position position="1"/>
    </location>
</feature>
<accession>Q9EPI1</accession>
<organism>
    <name type="scientific">Rattus norvegicus</name>
    <name type="common">Rat</name>
    <dbReference type="NCBI Taxonomy" id="10116"/>
    <lineage>
        <taxon>Eukaryota</taxon>
        <taxon>Metazoa</taxon>
        <taxon>Chordata</taxon>
        <taxon>Craniata</taxon>
        <taxon>Vertebrata</taxon>
        <taxon>Euteleostomi</taxon>
        <taxon>Mammalia</taxon>
        <taxon>Eutheria</taxon>
        <taxon>Euarchontoglires</taxon>
        <taxon>Glires</taxon>
        <taxon>Rodentia</taxon>
        <taxon>Myomorpha</taxon>
        <taxon>Muroidea</taxon>
        <taxon>Muridae</taxon>
        <taxon>Murinae</taxon>
        <taxon>Rattus</taxon>
    </lineage>
</organism>
<evidence type="ECO:0000250" key="1"/>
<evidence type="ECO:0000250" key="2">
    <source>
        <dbReference type="UniProtKB" id="Q811B1"/>
    </source>
</evidence>
<evidence type="ECO:0000250" key="3">
    <source>
        <dbReference type="UniProtKB" id="Q86Y38"/>
    </source>
</evidence>
<evidence type="ECO:0000255" key="4"/>
<evidence type="ECO:0000256" key="5">
    <source>
        <dbReference type="SAM" id="MobiDB-lite"/>
    </source>
</evidence>
<evidence type="ECO:0000305" key="6"/>
<gene>
    <name type="primary">Xylt1</name>
</gene>
<dbReference type="EC" id="2.4.2.26" evidence="3"/>
<dbReference type="EMBL" id="AJ295748">
    <property type="protein sequence ID" value="CAC16797.1"/>
    <property type="molecule type" value="mRNA"/>
</dbReference>
<dbReference type="SMR" id="Q9EPI1"/>
<dbReference type="FunCoup" id="Q9EPI1">
    <property type="interactions" value="398"/>
</dbReference>
<dbReference type="IntAct" id="Q9EPI1">
    <property type="interactions" value="1"/>
</dbReference>
<dbReference type="STRING" id="10116.ENSRNOP00000073845"/>
<dbReference type="CAZy" id="GT14">
    <property type="family name" value="Glycosyltransferase Family 14"/>
</dbReference>
<dbReference type="GlyCosmos" id="Q9EPI1">
    <property type="glycosylation" value="3 sites, No reported glycans"/>
</dbReference>
<dbReference type="GlyGen" id="Q9EPI1">
    <property type="glycosylation" value="5 sites"/>
</dbReference>
<dbReference type="PhosphoSitePlus" id="Q9EPI1"/>
<dbReference type="PaxDb" id="10116-ENSRNOP00000025008"/>
<dbReference type="UCSC" id="RGD:620093">
    <property type="organism name" value="rat"/>
</dbReference>
<dbReference type="AGR" id="RGD:620093"/>
<dbReference type="RGD" id="620093">
    <property type="gene designation" value="Xylt1"/>
</dbReference>
<dbReference type="eggNOG" id="KOG0799">
    <property type="taxonomic scope" value="Eukaryota"/>
</dbReference>
<dbReference type="InParanoid" id="Q9EPI1"/>
<dbReference type="PhylomeDB" id="Q9EPI1"/>
<dbReference type="Reactome" id="R-RNO-1971475">
    <property type="pathway name" value="A tetrasaccharide linker sequence is required for GAG synthesis"/>
</dbReference>
<dbReference type="UniPathway" id="UPA00755"/>
<dbReference type="UniPathway" id="UPA00756"/>
<dbReference type="Proteomes" id="UP000002494">
    <property type="component" value="Unplaced"/>
</dbReference>
<dbReference type="GO" id="GO:0005615">
    <property type="term" value="C:extracellular space"/>
    <property type="evidence" value="ECO:0000250"/>
    <property type="project" value="UniProtKB"/>
</dbReference>
<dbReference type="GO" id="GO:0005794">
    <property type="term" value="C:Golgi apparatus"/>
    <property type="evidence" value="ECO:0000266"/>
    <property type="project" value="RGD"/>
</dbReference>
<dbReference type="GO" id="GO:0000137">
    <property type="term" value="C:Golgi cis cisterna"/>
    <property type="evidence" value="ECO:0000250"/>
    <property type="project" value="UniProtKB"/>
</dbReference>
<dbReference type="GO" id="GO:0000139">
    <property type="term" value="C:Golgi membrane"/>
    <property type="evidence" value="ECO:0000250"/>
    <property type="project" value="UniProtKB"/>
</dbReference>
<dbReference type="GO" id="GO:0046872">
    <property type="term" value="F:metal ion binding"/>
    <property type="evidence" value="ECO:0007669"/>
    <property type="project" value="UniProtKB-KW"/>
</dbReference>
<dbReference type="GO" id="GO:0030158">
    <property type="term" value="F:protein xylosyltransferase activity"/>
    <property type="evidence" value="ECO:0000250"/>
    <property type="project" value="UniProtKB"/>
</dbReference>
<dbReference type="GO" id="GO:0034605">
    <property type="term" value="P:cellular response to heat"/>
    <property type="evidence" value="ECO:0000266"/>
    <property type="project" value="RGD"/>
</dbReference>
<dbReference type="GO" id="GO:0050650">
    <property type="term" value="P:chondroitin sulfate proteoglycan biosynthetic process"/>
    <property type="evidence" value="ECO:0000250"/>
    <property type="project" value="UniProtKB"/>
</dbReference>
<dbReference type="GO" id="GO:0048706">
    <property type="term" value="P:embryonic skeletal system development"/>
    <property type="evidence" value="ECO:0000250"/>
    <property type="project" value="UniProtKB"/>
</dbReference>
<dbReference type="GO" id="GO:0006024">
    <property type="term" value="P:glycosaminoglycan biosynthetic process"/>
    <property type="evidence" value="ECO:0000266"/>
    <property type="project" value="RGD"/>
</dbReference>
<dbReference type="GO" id="GO:0015012">
    <property type="term" value="P:heparan sulfate proteoglycan biosynthetic process"/>
    <property type="evidence" value="ECO:0000250"/>
    <property type="project" value="UniProtKB"/>
</dbReference>
<dbReference type="GO" id="GO:0048681">
    <property type="term" value="P:negative regulation of axon regeneration"/>
    <property type="evidence" value="ECO:0000315"/>
    <property type="project" value="RGD"/>
</dbReference>
<dbReference type="GO" id="GO:0043931">
    <property type="term" value="P:ossification involved in bone maturation"/>
    <property type="evidence" value="ECO:0000250"/>
    <property type="project" value="UniProtKB"/>
</dbReference>
<dbReference type="GO" id="GO:0030166">
    <property type="term" value="P:proteoglycan biosynthetic process"/>
    <property type="evidence" value="ECO:0000315"/>
    <property type="project" value="RGD"/>
</dbReference>
<dbReference type="GO" id="GO:0070555">
    <property type="term" value="P:response to interleukin-1"/>
    <property type="evidence" value="ECO:0000270"/>
    <property type="project" value="RGD"/>
</dbReference>
<dbReference type="InterPro" id="IPR003406">
    <property type="entry name" value="Glyco_trans_14"/>
</dbReference>
<dbReference type="InterPro" id="IPR043538">
    <property type="entry name" value="XYLT"/>
</dbReference>
<dbReference type="InterPro" id="IPR024448">
    <property type="entry name" value="XylT_C"/>
</dbReference>
<dbReference type="PANTHER" id="PTHR46025:SF2">
    <property type="entry name" value="XYLOSYLTRANSFERASE 1"/>
    <property type="match status" value="1"/>
</dbReference>
<dbReference type="PANTHER" id="PTHR46025">
    <property type="entry name" value="XYLOSYLTRANSFERASE OXT"/>
    <property type="match status" value="1"/>
</dbReference>
<dbReference type="Pfam" id="PF02485">
    <property type="entry name" value="Branch"/>
    <property type="match status" value="1"/>
</dbReference>
<dbReference type="Pfam" id="PF12529">
    <property type="entry name" value="Xylo_C"/>
    <property type="match status" value="1"/>
</dbReference>
<name>XYLT1_RAT</name>